<accession>B7KKR4</accession>
<gene>
    <name evidence="1" type="primary">atpA</name>
    <name type="ordered locus">PCC7424_2619</name>
</gene>
<organism>
    <name type="scientific">Gloeothece citriformis (strain PCC 7424)</name>
    <name type="common">Cyanothece sp. (strain PCC 7424)</name>
    <dbReference type="NCBI Taxonomy" id="65393"/>
    <lineage>
        <taxon>Bacteria</taxon>
        <taxon>Bacillati</taxon>
        <taxon>Cyanobacteriota</taxon>
        <taxon>Cyanophyceae</taxon>
        <taxon>Oscillatoriophycideae</taxon>
        <taxon>Chroococcales</taxon>
        <taxon>Aphanothecaceae</taxon>
        <taxon>Gloeothece</taxon>
        <taxon>Gloeothece citriformis</taxon>
    </lineage>
</organism>
<sequence>MVSIRPDEISSIIRQQIESYDQQVQVSNVGTVLQVGDGTARIYGLQQAMAQELLEFEDGTIGIALNLEEDNVGAVLMGSGYGIQEGSTVKATGRIAQVPVGEALVSRIVDALGRPIDGKGPINTNETRLLESPAPGIVARKSVCEPMQTGITAIDAMIPVGRGQRELIIGDRKTGKTAIAIDTIINQKGEDVICVYVAIGQKASTVAQVVDTLTEKGAMDYTVVVSASANDPATLQYLAPYTGATIAEYFMYKGKATLVIYDDLSKQAQAYRQISLLMRRPPGREAYPGDVFYLHSRLLERAAKLNDQLGGGSMTALPIIETQAGDVSAYIPTNVISITDGQIFLSSDLFNAGFRPAINAGISVSRVGSAAQTKAMKQVAGKLKLELAQFAELEAFSQFASDLDAATQAQLARGQRLREVLKQPQNSPLAVWEQVAIVYAGLNGYLDDIPPAQVTTFTQGLRDYLRNSKPKFPEIVGNEKKLTDEAESLLKEAIGEFKQGFTA</sequence>
<proteinExistence type="inferred from homology"/>
<reference key="1">
    <citation type="journal article" date="2011" name="MBio">
        <title>Novel metabolic attributes of the genus Cyanothece, comprising a group of unicellular nitrogen-fixing Cyanobacteria.</title>
        <authorList>
            <person name="Bandyopadhyay A."/>
            <person name="Elvitigala T."/>
            <person name="Welsh E."/>
            <person name="Stockel J."/>
            <person name="Liberton M."/>
            <person name="Min H."/>
            <person name="Sherman L.A."/>
            <person name="Pakrasi H.B."/>
        </authorList>
    </citation>
    <scope>NUCLEOTIDE SEQUENCE [LARGE SCALE GENOMIC DNA]</scope>
    <source>
        <strain>PCC 7424</strain>
    </source>
</reference>
<name>ATPA_GLOC7</name>
<feature type="chain" id="PRO_1000143363" description="ATP synthase subunit alpha">
    <location>
        <begin position="1"/>
        <end position="503"/>
    </location>
</feature>
<feature type="binding site" evidence="1">
    <location>
        <begin position="170"/>
        <end position="177"/>
    </location>
    <ligand>
        <name>ATP</name>
        <dbReference type="ChEBI" id="CHEBI:30616"/>
    </ligand>
</feature>
<feature type="site" description="Required for activity" evidence="1">
    <location>
        <position position="363"/>
    </location>
</feature>
<dbReference type="EC" id="7.1.2.2" evidence="1"/>
<dbReference type="EMBL" id="CP001291">
    <property type="protein sequence ID" value="ACK71033.1"/>
    <property type="molecule type" value="Genomic_DNA"/>
</dbReference>
<dbReference type="RefSeq" id="WP_015954636.1">
    <property type="nucleotide sequence ID" value="NC_011729.1"/>
</dbReference>
<dbReference type="SMR" id="B7KKR4"/>
<dbReference type="STRING" id="65393.PCC7424_2619"/>
<dbReference type="KEGG" id="cyc:PCC7424_2619"/>
<dbReference type="eggNOG" id="COG0056">
    <property type="taxonomic scope" value="Bacteria"/>
</dbReference>
<dbReference type="HOGENOM" id="CLU_010091_2_1_3"/>
<dbReference type="OrthoDB" id="9803053at2"/>
<dbReference type="Proteomes" id="UP000002384">
    <property type="component" value="Chromosome"/>
</dbReference>
<dbReference type="GO" id="GO:0031676">
    <property type="term" value="C:plasma membrane-derived thylakoid membrane"/>
    <property type="evidence" value="ECO:0007669"/>
    <property type="project" value="UniProtKB-SubCell"/>
</dbReference>
<dbReference type="GO" id="GO:0045259">
    <property type="term" value="C:proton-transporting ATP synthase complex"/>
    <property type="evidence" value="ECO:0007669"/>
    <property type="project" value="UniProtKB-KW"/>
</dbReference>
<dbReference type="GO" id="GO:0043531">
    <property type="term" value="F:ADP binding"/>
    <property type="evidence" value="ECO:0007669"/>
    <property type="project" value="TreeGrafter"/>
</dbReference>
<dbReference type="GO" id="GO:0005524">
    <property type="term" value="F:ATP binding"/>
    <property type="evidence" value="ECO:0007669"/>
    <property type="project" value="UniProtKB-UniRule"/>
</dbReference>
<dbReference type="GO" id="GO:0046933">
    <property type="term" value="F:proton-transporting ATP synthase activity, rotational mechanism"/>
    <property type="evidence" value="ECO:0007669"/>
    <property type="project" value="UniProtKB-UniRule"/>
</dbReference>
<dbReference type="CDD" id="cd18113">
    <property type="entry name" value="ATP-synt_F1_alpha_C"/>
    <property type="match status" value="1"/>
</dbReference>
<dbReference type="CDD" id="cd18116">
    <property type="entry name" value="ATP-synt_F1_alpha_N"/>
    <property type="match status" value="1"/>
</dbReference>
<dbReference type="CDD" id="cd01132">
    <property type="entry name" value="F1-ATPase_alpha_CD"/>
    <property type="match status" value="1"/>
</dbReference>
<dbReference type="FunFam" id="1.20.150.20:FF:000001">
    <property type="entry name" value="ATP synthase subunit alpha"/>
    <property type="match status" value="1"/>
</dbReference>
<dbReference type="FunFam" id="2.40.30.20:FF:000001">
    <property type="entry name" value="ATP synthase subunit alpha"/>
    <property type="match status" value="1"/>
</dbReference>
<dbReference type="FunFam" id="3.40.50.300:FF:000002">
    <property type="entry name" value="ATP synthase subunit alpha"/>
    <property type="match status" value="1"/>
</dbReference>
<dbReference type="Gene3D" id="2.40.30.20">
    <property type="match status" value="1"/>
</dbReference>
<dbReference type="Gene3D" id="1.20.150.20">
    <property type="entry name" value="ATP synthase alpha/beta chain, C-terminal domain"/>
    <property type="match status" value="1"/>
</dbReference>
<dbReference type="Gene3D" id="3.40.50.300">
    <property type="entry name" value="P-loop containing nucleotide triphosphate hydrolases"/>
    <property type="match status" value="1"/>
</dbReference>
<dbReference type="HAMAP" id="MF_01346">
    <property type="entry name" value="ATP_synth_alpha_bact"/>
    <property type="match status" value="1"/>
</dbReference>
<dbReference type="InterPro" id="IPR023366">
    <property type="entry name" value="ATP_synth_asu-like_sf"/>
</dbReference>
<dbReference type="InterPro" id="IPR000793">
    <property type="entry name" value="ATP_synth_asu_C"/>
</dbReference>
<dbReference type="InterPro" id="IPR038376">
    <property type="entry name" value="ATP_synth_asu_C_sf"/>
</dbReference>
<dbReference type="InterPro" id="IPR033732">
    <property type="entry name" value="ATP_synth_F1_a_nt-bd_dom"/>
</dbReference>
<dbReference type="InterPro" id="IPR005294">
    <property type="entry name" value="ATP_synth_F1_asu"/>
</dbReference>
<dbReference type="InterPro" id="IPR020003">
    <property type="entry name" value="ATPase_a/bsu_AS"/>
</dbReference>
<dbReference type="InterPro" id="IPR004100">
    <property type="entry name" value="ATPase_F1/V1/A1_a/bsu_N"/>
</dbReference>
<dbReference type="InterPro" id="IPR036121">
    <property type="entry name" value="ATPase_F1/V1/A1_a/bsu_N_sf"/>
</dbReference>
<dbReference type="InterPro" id="IPR000194">
    <property type="entry name" value="ATPase_F1/V1/A1_a/bsu_nucl-bd"/>
</dbReference>
<dbReference type="InterPro" id="IPR027417">
    <property type="entry name" value="P-loop_NTPase"/>
</dbReference>
<dbReference type="NCBIfam" id="TIGR00962">
    <property type="entry name" value="atpA"/>
    <property type="match status" value="1"/>
</dbReference>
<dbReference type="NCBIfam" id="NF009884">
    <property type="entry name" value="PRK13343.1"/>
    <property type="match status" value="1"/>
</dbReference>
<dbReference type="PANTHER" id="PTHR48082">
    <property type="entry name" value="ATP SYNTHASE SUBUNIT ALPHA, MITOCHONDRIAL"/>
    <property type="match status" value="1"/>
</dbReference>
<dbReference type="PANTHER" id="PTHR48082:SF2">
    <property type="entry name" value="ATP SYNTHASE SUBUNIT ALPHA, MITOCHONDRIAL"/>
    <property type="match status" value="1"/>
</dbReference>
<dbReference type="Pfam" id="PF00006">
    <property type="entry name" value="ATP-synt_ab"/>
    <property type="match status" value="1"/>
</dbReference>
<dbReference type="Pfam" id="PF00306">
    <property type="entry name" value="ATP-synt_ab_C"/>
    <property type="match status" value="1"/>
</dbReference>
<dbReference type="Pfam" id="PF02874">
    <property type="entry name" value="ATP-synt_ab_N"/>
    <property type="match status" value="1"/>
</dbReference>
<dbReference type="PIRSF" id="PIRSF039088">
    <property type="entry name" value="F_ATPase_subunit_alpha"/>
    <property type="match status" value="1"/>
</dbReference>
<dbReference type="SUPFAM" id="SSF47917">
    <property type="entry name" value="C-terminal domain of alpha and beta subunits of F1 ATP synthase"/>
    <property type="match status" value="1"/>
</dbReference>
<dbReference type="SUPFAM" id="SSF50615">
    <property type="entry name" value="N-terminal domain of alpha and beta subunits of F1 ATP synthase"/>
    <property type="match status" value="1"/>
</dbReference>
<dbReference type="SUPFAM" id="SSF52540">
    <property type="entry name" value="P-loop containing nucleoside triphosphate hydrolases"/>
    <property type="match status" value="1"/>
</dbReference>
<dbReference type="PROSITE" id="PS00152">
    <property type="entry name" value="ATPASE_ALPHA_BETA"/>
    <property type="match status" value="1"/>
</dbReference>
<evidence type="ECO:0000255" key="1">
    <source>
        <dbReference type="HAMAP-Rule" id="MF_01346"/>
    </source>
</evidence>
<protein>
    <recommendedName>
        <fullName evidence="1">ATP synthase subunit alpha</fullName>
        <ecNumber evidence="1">7.1.2.2</ecNumber>
    </recommendedName>
    <alternativeName>
        <fullName evidence="1">ATP synthase F1 sector subunit alpha</fullName>
    </alternativeName>
    <alternativeName>
        <fullName evidence="1">F-ATPase subunit alpha</fullName>
    </alternativeName>
</protein>
<keyword id="KW-0066">ATP synthesis</keyword>
<keyword id="KW-0067">ATP-binding</keyword>
<keyword id="KW-0139">CF(1)</keyword>
<keyword id="KW-0375">Hydrogen ion transport</keyword>
<keyword id="KW-0406">Ion transport</keyword>
<keyword id="KW-0472">Membrane</keyword>
<keyword id="KW-0547">Nucleotide-binding</keyword>
<keyword id="KW-1185">Reference proteome</keyword>
<keyword id="KW-0793">Thylakoid</keyword>
<keyword id="KW-1278">Translocase</keyword>
<keyword id="KW-0813">Transport</keyword>
<comment type="function">
    <text evidence="1">Produces ATP from ADP in the presence of a proton gradient across the membrane. The alpha chain is a regulatory subunit.</text>
</comment>
<comment type="catalytic activity">
    <reaction evidence="1">
        <text>ATP + H2O + 4 H(+)(in) = ADP + phosphate + 5 H(+)(out)</text>
        <dbReference type="Rhea" id="RHEA:57720"/>
        <dbReference type="ChEBI" id="CHEBI:15377"/>
        <dbReference type="ChEBI" id="CHEBI:15378"/>
        <dbReference type="ChEBI" id="CHEBI:30616"/>
        <dbReference type="ChEBI" id="CHEBI:43474"/>
        <dbReference type="ChEBI" id="CHEBI:456216"/>
        <dbReference type="EC" id="7.1.2.2"/>
    </reaction>
</comment>
<comment type="subunit">
    <text evidence="1">F-type ATPases have 2 components, CF(1) - the catalytic core - and CF(0) - the membrane proton channel. CF(1) has five subunits: alpha(3), beta(3), gamma(1), delta(1), epsilon(1). CF(0) has four main subunits: a, b, b' and c.</text>
</comment>
<comment type="subcellular location">
    <subcellularLocation>
        <location evidence="1">Cellular thylakoid membrane</location>
        <topology evidence="1">Peripheral membrane protein</topology>
    </subcellularLocation>
</comment>
<comment type="similarity">
    <text evidence="1">Belongs to the ATPase alpha/beta chains family.</text>
</comment>